<name>MND1_HUMAN</name>
<comment type="function">
    <text evidence="1 3">Required for proper homologous chromosome pairing and efficient cross-over and intragenic recombination during meiosis (By similarity). Stimulates both DMC1- and RAD51-mediated homologous strand assimilation, which is required for the resolution of meiotic double-strand breaks.</text>
</comment>
<comment type="subunit">
    <text evidence="1 3">Heterodimer with PSMC3IP/HOP2. MND1-PSMC3IP interacts with DMC1 and RAD51 and binds preferentially to dsDNA.</text>
</comment>
<comment type="interaction">
    <interactant intactId="EBI-11137441">
        <id>Q9BWT6</id>
    </interactant>
    <interactant intactId="EBI-9057595">
        <id>Q9P2W1</id>
        <label>PSMC3IP</label>
    </interactant>
    <organismsDiffer>false</organismsDiffer>
    <experiments>8</experiments>
</comment>
<comment type="subcellular location">
    <subcellularLocation>
        <location evidence="4">Nucleus</location>
    </subcellularLocation>
</comment>
<comment type="similarity">
    <text evidence="4">Belongs to the MND1 family.</text>
</comment>
<evidence type="ECO:0000250" key="1">
    <source>
        <dbReference type="UniProtKB" id="Q8K396"/>
    </source>
</evidence>
<evidence type="ECO:0000255" key="2"/>
<evidence type="ECO:0000269" key="3">
    <source>
    </source>
</evidence>
<evidence type="ECO:0000305" key="4"/>
<evidence type="ECO:0000312" key="5">
    <source>
        <dbReference type="EMBL" id="AAH32142.1"/>
    </source>
</evidence>
<evidence type="ECO:0000312" key="6">
    <source>
        <dbReference type="EMBL" id="AAK26168.1"/>
    </source>
</evidence>
<evidence type="ECO:0000312" key="7">
    <source>
        <dbReference type="EMBL" id="EAX04964.1"/>
    </source>
</evidence>
<evidence type="ECO:0007744" key="8">
    <source>
    </source>
</evidence>
<keyword id="KW-0007">Acetylation</keyword>
<keyword id="KW-0175">Coiled coil</keyword>
<keyword id="KW-0233">DNA recombination</keyword>
<keyword id="KW-0238">DNA-binding</keyword>
<keyword id="KW-0469">Meiosis</keyword>
<keyword id="KW-0539">Nucleus</keyword>
<keyword id="KW-1267">Proteomics identification</keyword>
<keyword id="KW-1185">Reference proteome</keyword>
<gene>
    <name evidence="7" type="primary">MND1</name>
    <name evidence="6" type="synonym">GAJ</name>
</gene>
<accession>Q9BWT6</accession>
<accession>B2R5F9</accession>
<dbReference type="EMBL" id="AY028916">
    <property type="protein sequence ID" value="AAK26168.1"/>
    <property type="molecule type" value="mRNA"/>
</dbReference>
<dbReference type="EMBL" id="AK312172">
    <property type="protein sequence ID" value="BAG35106.1"/>
    <property type="molecule type" value="mRNA"/>
</dbReference>
<dbReference type="EMBL" id="CH471056">
    <property type="protein sequence ID" value="EAX04964.1"/>
    <property type="molecule type" value="Genomic_DNA"/>
</dbReference>
<dbReference type="EMBL" id="CH471056">
    <property type="protein sequence ID" value="EAX04965.1"/>
    <property type="molecule type" value="Genomic_DNA"/>
</dbReference>
<dbReference type="EMBL" id="BC032142">
    <property type="protein sequence ID" value="AAH32142.1"/>
    <property type="molecule type" value="mRNA"/>
</dbReference>
<dbReference type="CCDS" id="CCDS3782.1"/>
<dbReference type="RefSeq" id="NP_115493.1">
    <property type="nucleotide sequence ID" value="NM_032117.4"/>
</dbReference>
<dbReference type="SMR" id="Q9BWT6"/>
<dbReference type="BioGRID" id="123852">
    <property type="interactions" value="62"/>
</dbReference>
<dbReference type="ComplexPortal" id="CPX-6661">
    <property type="entry name" value="HOP2-MND1 recombination assembly factor complex"/>
</dbReference>
<dbReference type="CORUM" id="Q9BWT6"/>
<dbReference type="FunCoup" id="Q9BWT6">
    <property type="interactions" value="637"/>
</dbReference>
<dbReference type="IntAct" id="Q9BWT6">
    <property type="interactions" value="39"/>
</dbReference>
<dbReference type="STRING" id="9606.ENSP00000240488"/>
<dbReference type="GlyGen" id="Q9BWT6">
    <property type="glycosylation" value="1 site, 1 O-linked glycan (1 site)"/>
</dbReference>
<dbReference type="iPTMnet" id="Q9BWT6"/>
<dbReference type="PhosphoSitePlus" id="Q9BWT6"/>
<dbReference type="BioMuta" id="MND1"/>
<dbReference type="DMDM" id="74733462"/>
<dbReference type="jPOST" id="Q9BWT6"/>
<dbReference type="MassIVE" id="Q9BWT6"/>
<dbReference type="PaxDb" id="9606-ENSP00000240488"/>
<dbReference type="PeptideAtlas" id="Q9BWT6"/>
<dbReference type="ProteomicsDB" id="79314"/>
<dbReference type="Pumba" id="Q9BWT6"/>
<dbReference type="Antibodypedia" id="27871">
    <property type="antibodies" value="157 antibodies from 21 providers"/>
</dbReference>
<dbReference type="DNASU" id="84057"/>
<dbReference type="Ensembl" id="ENST00000240488.8">
    <property type="protein sequence ID" value="ENSP00000240488.3"/>
    <property type="gene ID" value="ENSG00000121211.8"/>
</dbReference>
<dbReference type="GeneID" id="84057"/>
<dbReference type="KEGG" id="hsa:84057"/>
<dbReference type="MANE-Select" id="ENST00000240488.8">
    <property type="protein sequence ID" value="ENSP00000240488.3"/>
    <property type="RefSeq nucleotide sequence ID" value="NM_032117.4"/>
    <property type="RefSeq protein sequence ID" value="NP_115493.1"/>
</dbReference>
<dbReference type="UCSC" id="uc003ink.3">
    <property type="organism name" value="human"/>
</dbReference>
<dbReference type="AGR" id="HGNC:24839"/>
<dbReference type="CTD" id="84057"/>
<dbReference type="DisGeNET" id="84057"/>
<dbReference type="GeneCards" id="MND1"/>
<dbReference type="HGNC" id="HGNC:24839">
    <property type="gene designation" value="MND1"/>
</dbReference>
<dbReference type="HPA" id="ENSG00000121211">
    <property type="expression patterns" value="Tissue enhanced (bone marrow, lymphoid tissue, testis)"/>
</dbReference>
<dbReference type="MIM" id="611422">
    <property type="type" value="gene"/>
</dbReference>
<dbReference type="neXtProt" id="NX_Q9BWT6"/>
<dbReference type="OpenTargets" id="ENSG00000121211"/>
<dbReference type="PharmGKB" id="PA143485544"/>
<dbReference type="VEuPathDB" id="HostDB:ENSG00000121211"/>
<dbReference type="eggNOG" id="KOG3433">
    <property type="taxonomic scope" value="Eukaryota"/>
</dbReference>
<dbReference type="GeneTree" id="ENSGT00490000043413"/>
<dbReference type="HOGENOM" id="CLU_080628_3_1_1"/>
<dbReference type="InParanoid" id="Q9BWT6"/>
<dbReference type="OMA" id="VCYWAFP"/>
<dbReference type="OrthoDB" id="273345at2759"/>
<dbReference type="PAN-GO" id="Q9BWT6">
    <property type="GO annotations" value="3 GO annotations based on evolutionary models"/>
</dbReference>
<dbReference type="PhylomeDB" id="Q9BWT6"/>
<dbReference type="TreeFam" id="TF314068"/>
<dbReference type="PathwayCommons" id="Q9BWT6"/>
<dbReference type="Reactome" id="R-HSA-912446">
    <property type="pathway name" value="Meiotic recombination"/>
</dbReference>
<dbReference type="SignaLink" id="Q9BWT6"/>
<dbReference type="BioGRID-ORCS" id="84057">
    <property type="hits" value="18 hits in 1165 CRISPR screens"/>
</dbReference>
<dbReference type="ChiTaRS" id="MND1">
    <property type="organism name" value="human"/>
</dbReference>
<dbReference type="GenomeRNAi" id="84057"/>
<dbReference type="Pharos" id="Q9BWT6">
    <property type="development level" value="Tbio"/>
</dbReference>
<dbReference type="PRO" id="PR:Q9BWT6"/>
<dbReference type="Proteomes" id="UP000005640">
    <property type="component" value="Chromosome 4"/>
</dbReference>
<dbReference type="RNAct" id="Q9BWT6">
    <property type="molecule type" value="protein"/>
</dbReference>
<dbReference type="Bgee" id="ENSG00000121211">
    <property type="expression patterns" value="Expressed in primordial germ cell in gonad and 99 other cell types or tissues"/>
</dbReference>
<dbReference type="ExpressionAtlas" id="Q9BWT6">
    <property type="expression patterns" value="baseline and differential"/>
</dbReference>
<dbReference type="GO" id="GO:0005634">
    <property type="term" value="C:nucleus"/>
    <property type="evidence" value="ECO:0007669"/>
    <property type="project" value="UniProtKB-SubCell"/>
</dbReference>
<dbReference type="GO" id="GO:0003690">
    <property type="term" value="F:double-stranded DNA binding"/>
    <property type="evidence" value="ECO:0007669"/>
    <property type="project" value="InterPro"/>
</dbReference>
<dbReference type="GO" id="GO:0007129">
    <property type="term" value="P:homologous chromosome pairing at meiosis"/>
    <property type="evidence" value="ECO:0000314"/>
    <property type="project" value="ComplexPortal"/>
</dbReference>
<dbReference type="GO" id="GO:0007131">
    <property type="term" value="P:reciprocal meiotic recombination"/>
    <property type="evidence" value="ECO:0000314"/>
    <property type="project" value="ComplexPortal"/>
</dbReference>
<dbReference type="InterPro" id="IPR040661">
    <property type="entry name" value="LZ3wCH"/>
</dbReference>
<dbReference type="InterPro" id="IPR005647">
    <property type="entry name" value="Mnd1"/>
</dbReference>
<dbReference type="InterPro" id="IPR040453">
    <property type="entry name" value="Mnd1_HTH"/>
</dbReference>
<dbReference type="InterPro" id="IPR036390">
    <property type="entry name" value="WH_DNA-bd_sf"/>
</dbReference>
<dbReference type="PANTHER" id="PTHR31398">
    <property type="entry name" value="MEIOTIC NUCLEAR DIVISION PROTEIN 1 HOMOLOG"/>
    <property type="match status" value="1"/>
</dbReference>
<dbReference type="PANTHER" id="PTHR31398:SF0">
    <property type="entry name" value="MEIOTIC NUCLEAR DIVISION PROTEIN 1 HOMOLOG"/>
    <property type="match status" value="1"/>
</dbReference>
<dbReference type="Pfam" id="PF18517">
    <property type="entry name" value="LZ3wCH"/>
    <property type="match status" value="1"/>
</dbReference>
<dbReference type="Pfam" id="PF03962">
    <property type="entry name" value="Mnd1"/>
    <property type="match status" value="1"/>
</dbReference>
<dbReference type="PIRSF" id="PIRSF026991">
    <property type="entry name" value="Mnd1"/>
    <property type="match status" value="1"/>
</dbReference>
<dbReference type="SUPFAM" id="SSF46785">
    <property type="entry name" value="Winged helix' DNA-binding domain"/>
    <property type="match status" value="1"/>
</dbReference>
<proteinExistence type="evidence at protein level"/>
<feature type="initiator methionine" description="Removed" evidence="8">
    <location>
        <position position="1"/>
    </location>
</feature>
<feature type="chain" id="PRO_0000318081" description="Meiotic nuclear division protein 1 homolog">
    <location>
        <begin position="2"/>
        <end position="205"/>
    </location>
</feature>
<feature type="coiled-coil region" evidence="2">
    <location>
        <begin position="84"/>
        <end position="173"/>
    </location>
</feature>
<feature type="modified residue" description="N-acetylserine" evidence="8">
    <location>
        <position position="2"/>
    </location>
</feature>
<organism>
    <name type="scientific">Homo sapiens</name>
    <name type="common">Human</name>
    <dbReference type="NCBI Taxonomy" id="9606"/>
    <lineage>
        <taxon>Eukaryota</taxon>
        <taxon>Metazoa</taxon>
        <taxon>Chordata</taxon>
        <taxon>Craniata</taxon>
        <taxon>Vertebrata</taxon>
        <taxon>Euteleostomi</taxon>
        <taxon>Mammalia</taxon>
        <taxon>Eutheria</taxon>
        <taxon>Euarchontoglires</taxon>
        <taxon>Primates</taxon>
        <taxon>Haplorrhini</taxon>
        <taxon>Catarrhini</taxon>
        <taxon>Hominidae</taxon>
        <taxon>Homo</taxon>
    </lineage>
</organism>
<sequence length="205" mass="23753">MSKKKGLSAEEKRTRMMEIFSETKDVFQLKDLEKIAPKEKGITAMSVKEVLQSLVDDGMVDCERIGTSNYYWAFPSKALHARKHKLEVLESQLSEGSQKHASLQKSIEKAKIGRCETEERTRLAKELSSLRDQREQLKAEVEKYKDCDPQVVEEIRQANKVAKEAANRWTDNIFAIKSWAKRKFGFEENKIDRTFGIPEDFDYID</sequence>
<reference evidence="6" key="1">
    <citation type="submission" date="2001-03" db="EMBL/GenBank/DDBJ databases">
        <title>GAJ protein isolated from Jurkat cells.</title>
        <authorList>
            <person name="Solis G."/>
            <person name="Hofer H.W."/>
        </authorList>
    </citation>
    <scope>NUCLEOTIDE SEQUENCE [MRNA]</scope>
</reference>
<reference key="2">
    <citation type="journal article" date="2004" name="Nat. Genet.">
        <title>Complete sequencing and characterization of 21,243 full-length human cDNAs.</title>
        <authorList>
            <person name="Ota T."/>
            <person name="Suzuki Y."/>
            <person name="Nishikawa T."/>
            <person name="Otsuki T."/>
            <person name="Sugiyama T."/>
            <person name="Irie R."/>
            <person name="Wakamatsu A."/>
            <person name="Hayashi K."/>
            <person name="Sato H."/>
            <person name="Nagai K."/>
            <person name="Kimura K."/>
            <person name="Makita H."/>
            <person name="Sekine M."/>
            <person name="Obayashi M."/>
            <person name="Nishi T."/>
            <person name="Shibahara T."/>
            <person name="Tanaka T."/>
            <person name="Ishii S."/>
            <person name="Yamamoto J."/>
            <person name="Saito K."/>
            <person name="Kawai Y."/>
            <person name="Isono Y."/>
            <person name="Nakamura Y."/>
            <person name="Nagahari K."/>
            <person name="Murakami K."/>
            <person name="Yasuda T."/>
            <person name="Iwayanagi T."/>
            <person name="Wagatsuma M."/>
            <person name="Shiratori A."/>
            <person name="Sudo H."/>
            <person name="Hosoiri T."/>
            <person name="Kaku Y."/>
            <person name="Kodaira H."/>
            <person name="Kondo H."/>
            <person name="Sugawara M."/>
            <person name="Takahashi M."/>
            <person name="Kanda K."/>
            <person name="Yokoi T."/>
            <person name="Furuya T."/>
            <person name="Kikkawa E."/>
            <person name="Omura Y."/>
            <person name="Abe K."/>
            <person name="Kamihara K."/>
            <person name="Katsuta N."/>
            <person name="Sato K."/>
            <person name="Tanikawa M."/>
            <person name="Yamazaki M."/>
            <person name="Ninomiya K."/>
            <person name="Ishibashi T."/>
            <person name="Yamashita H."/>
            <person name="Murakawa K."/>
            <person name="Fujimori K."/>
            <person name="Tanai H."/>
            <person name="Kimata M."/>
            <person name="Watanabe M."/>
            <person name="Hiraoka S."/>
            <person name="Chiba Y."/>
            <person name="Ishida S."/>
            <person name="Ono Y."/>
            <person name="Takiguchi S."/>
            <person name="Watanabe S."/>
            <person name="Yosida M."/>
            <person name="Hotuta T."/>
            <person name="Kusano J."/>
            <person name="Kanehori K."/>
            <person name="Takahashi-Fujii A."/>
            <person name="Hara H."/>
            <person name="Tanase T.-O."/>
            <person name="Nomura Y."/>
            <person name="Togiya S."/>
            <person name="Komai F."/>
            <person name="Hara R."/>
            <person name="Takeuchi K."/>
            <person name="Arita M."/>
            <person name="Imose N."/>
            <person name="Musashino K."/>
            <person name="Yuuki H."/>
            <person name="Oshima A."/>
            <person name="Sasaki N."/>
            <person name="Aotsuka S."/>
            <person name="Yoshikawa Y."/>
            <person name="Matsunawa H."/>
            <person name="Ichihara T."/>
            <person name="Shiohata N."/>
            <person name="Sano S."/>
            <person name="Moriya S."/>
            <person name="Momiyama H."/>
            <person name="Satoh N."/>
            <person name="Takami S."/>
            <person name="Terashima Y."/>
            <person name="Suzuki O."/>
            <person name="Nakagawa S."/>
            <person name="Senoh A."/>
            <person name="Mizoguchi H."/>
            <person name="Goto Y."/>
            <person name="Shimizu F."/>
            <person name="Wakebe H."/>
            <person name="Hishigaki H."/>
            <person name="Watanabe T."/>
            <person name="Sugiyama A."/>
            <person name="Takemoto M."/>
            <person name="Kawakami B."/>
            <person name="Yamazaki M."/>
            <person name="Watanabe K."/>
            <person name="Kumagai A."/>
            <person name="Itakura S."/>
            <person name="Fukuzumi Y."/>
            <person name="Fujimori Y."/>
            <person name="Komiyama M."/>
            <person name="Tashiro H."/>
            <person name="Tanigami A."/>
            <person name="Fujiwara T."/>
            <person name="Ono T."/>
            <person name="Yamada K."/>
            <person name="Fujii Y."/>
            <person name="Ozaki K."/>
            <person name="Hirao M."/>
            <person name="Ohmori Y."/>
            <person name="Kawabata A."/>
            <person name="Hikiji T."/>
            <person name="Kobatake N."/>
            <person name="Inagaki H."/>
            <person name="Ikema Y."/>
            <person name="Okamoto S."/>
            <person name="Okitani R."/>
            <person name="Kawakami T."/>
            <person name="Noguchi S."/>
            <person name="Itoh T."/>
            <person name="Shigeta K."/>
            <person name="Senba T."/>
            <person name="Matsumura K."/>
            <person name="Nakajima Y."/>
            <person name="Mizuno T."/>
            <person name="Morinaga M."/>
            <person name="Sasaki M."/>
            <person name="Togashi T."/>
            <person name="Oyama M."/>
            <person name="Hata H."/>
            <person name="Watanabe M."/>
            <person name="Komatsu T."/>
            <person name="Mizushima-Sugano J."/>
            <person name="Satoh T."/>
            <person name="Shirai Y."/>
            <person name="Takahashi Y."/>
            <person name="Nakagawa K."/>
            <person name="Okumura K."/>
            <person name="Nagase T."/>
            <person name="Nomura N."/>
            <person name="Kikuchi H."/>
            <person name="Masuho Y."/>
            <person name="Yamashita R."/>
            <person name="Nakai K."/>
            <person name="Yada T."/>
            <person name="Nakamura Y."/>
            <person name="Ohara O."/>
            <person name="Isogai T."/>
            <person name="Sugano S."/>
        </authorList>
    </citation>
    <scope>NUCLEOTIDE SEQUENCE [LARGE SCALE MRNA]</scope>
    <source>
        <tissue>Brain</tissue>
    </source>
</reference>
<reference evidence="6" key="3">
    <citation type="submission" date="2005-09" db="EMBL/GenBank/DDBJ databases">
        <authorList>
            <person name="Mural R.J."/>
            <person name="Istrail S."/>
            <person name="Sutton G.G."/>
            <person name="Florea L."/>
            <person name="Halpern A.L."/>
            <person name="Mobarry C.M."/>
            <person name="Lippert R."/>
            <person name="Walenz B."/>
            <person name="Shatkay H."/>
            <person name="Dew I."/>
            <person name="Miller J.R."/>
            <person name="Flanigan M.J."/>
            <person name="Edwards N.J."/>
            <person name="Bolanos R."/>
            <person name="Fasulo D."/>
            <person name="Halldorsson B.V."/>
            <person name="Hannenhalli S."/>
            <person name="Turner R."/>
            <person name="Yooseph S."/>
            <person name="Lu F."/>
            <person name="Nusskern D.R."/>
            <person name="Shue B.C."/>
            <person name="Zheng X.H."/>
            <person name="Zhong F."/>
            <person name="Delcher A.L."/>
            <person name="Huson D.H."/>
            <person name="Kravitz S.A."/>
            <person name="Mouchard L."/>
            <person name="Reinert K."/>
            <person name="Remington K.A."/>
            <person name="Clark A.G."/>
            <person name="Waterman M.S."/>
            <person name="Eichler E.E."/>
            <person name="Adams M.D."/>
            <person name="Hunkapiller M.W."/>
            <person name="Myers E.W."/>
            <person name="Venter J.C."/>
        </authorList>
    </citation>
    <scope>NUCLEOTIDE SEQUENCE [LARGE SCALE GENOMIC DNA]</scope>
</reference>
<reference evidence="5" key="4">
    <citation type="journal article" date="2004" name="Genome Res.">
        <title>The status, quality, and expansion of the NIH full-length cDNA project: the Mammalian Gene Collection (MGC).</title>
        <authorList>
            <consortium name="The MGC Project Team"/>
        </authorList>
    </citation>
    <scope>NUCLEOTIDE SEQUENCE [LARGE SCALE MRNA]</scope>
    <source>
        <tissue evidence="5">Lymph</tissue>
    </source>
</reference>
<reference evidence="4" key="5">
    <citation type="journal article" date="2006" name="J. Biol. Chem.">
        <title>Stimulation of DNA strand exchange by the human TBPIP/Hop2-Mnd1 complex.</title>
        <authorList>
            <person name="Enomoto R."/>
            <person name="Kinebuchi T."/>
            <person name="Sato M."/>
            <person name="Yagi H."/>
            <person name="Kurumizaka H."/>
            <person name="Yokoyama S."/>
        </authorList>
    </citation>
    <scope>FUNCTION</scope>
    <scope>INTERACTION WITH PSMC3IP</scope>
</reference>
<reference key="6">
    <citation type="journal article" date="2011" name="BMC Syst. Biol.">
        <title>Initial characterization of the human central proteome.</title>
        <authorList>
            <person name="Burkard T.R."/>
            <person name="Planyavsky M."/>
            <person name="Kaupe I."/>
            <person name="Breitwieser F.P."/>
            <person name="Buerckstuemmer T."/>
            <person name="Bennett K.L."/>
            <person name="Superti-Furga G."/>
            <person name="Colinge J."/>
        </authorList>
    </citation>
    <scope>IDENTIFICATION BY MASS SPECTROMETRY [LARGE SCALE ANALYSIS]</scope>
</reference>
<reference key="7">
    <citation type="journal article" date="2012" name="Proc. Natl. Acad. Sci. U.S.A.">
        <title>N-terminal acetylome analyses and functional insights of the N-terminal acetyltransferase NatB.</title>
        <authorList>
            <person name="Van Damme P."/>
            <person name="Lasa M."/>
            <person name="Polevoda B."/>
            <person name="Gazquez C."/>
            <person name="Elosegui-Artola A."/>
            <person name="Kim D.S."/>
            <person name="De Juan-Pardo E."/>
            <person name="Demeyer K."/>
            <person name="Hole K."/>
            <person name="Larrea E."/>
            <person name="Timmerman E."/>
            <person name="Prieto J."/>
            <person name="Arnesen T."/>
            <person name="Sherman F."/>
            <person name="Gevaert K."/>
            <person name="Aldabe R."/>
        </authorList>
    </citation>
    <scope>ACETYLATION [LARGE SCALE ANALYSIS] AT SER-2</scope>
    <scope>CLEAVAGE OF INITIATOR METHIONINE [LARGE SCALE ANALYSIS]</scope>
    <scope>IDENTIFICATION BY MASS SPECTROMETRY [LARGE SCALE ANALYSIS]</scope>
</reference>
<protein>
    <recommendedName>
        <fullName>Meiotic nuclear division protein 1 homolog</fullName>
    </recommendedName>
</protein>